<name>FTSH_MESCH</name>
<feature type="chain" id="PRO_0000400358" description="ATP-dependent zinc metalloprotease FtsH">
    <location>
        <begin position="1"/>
        <end position="754"/>
    </location>
</feature>
<feature type="topological domain" description="Cytoplasmic" evidence="1">
    <location>
        <begin position="1"/>
        <end position="9"/>
    </location>
</feature>
<feature type="transmembrane region" description="Helical" evidence="1">
    <location>
        <begin position="10"/>
        <end position="30"/>
    </location>
</feature>
<feature type="topological domain" description="Extracellular" evidence="1">
    <location>
        <begin position="31"/>
        <end position="186"/>
    </location>
</feature>
<feature type="transmembrane region" description="Helical" evidence="1">
    <location>
        <begin position="187"/>
        <end position="207"/>
    </location>
</feature>
<feature type="topological domain" description="Cytoplasmic" evidence="1">
    <location>
        <begin position="208"/>
        <end position="754"/>
    </location>
</feature>
<feature type="region of interest" description="Disordered" evidence="2">
    <location>
        <begin position="713"/>
        <end position="754"/>
    </location>
</feature>
<feature type="compositionally biased region" description="Basic and acidic residues" evidence="2">
    <location>
        <begin position="743"/>
        <end position="754"/>
    </location>
</feature>
<feature type="active site" evidence="1">
    <location>
        <position position="500"/>
    </location>
</feature>
<feature type="binding site" evidence="1">
    <location>
        <begin position="277"/>
        <end position="284"/>
    </location>
    <ligand>
        <name>ATP</name>
        <dbReference type="ChEBI" id="CHEBI:30616"/>
    </ligand>
</feature>
<feature type="binding site" evidence="1">
    <location>
        <position position="499"/>
    </location>
    <ligand>
        <name>Zn(2+)</name>
        <dbReference type="ChEBI" id="CHEBI:29105"/>
        <note>catalytic</note>
    </ligand>
</feature>
<feature type="binding site" evidence="1">
    <location>
        <position position="503"/>
    </location>
    <ligand>
        <name>Zn(2+)</name>
        <dbReference type="ChEBI" id="CHEBI:29105"/>
        <note>catalytic</note>
    </ligand>
</feature>
<feature type="binding site" evidence="1">
    <location>
        <position position="577"/>
    </location>
    <ligand>
        <name>Zn(2+)</name>
        <dbReference type="ChEBI" id="CHEBI:29105"/>
        <note>catalytic</note>
    </ligand>
</feature>
<accession>C5J6A7</accession>
<dbReference type="EC" id="3.4.24.-" evidence="1"/>
<dbReference type="EMBL" id="FM864216">
    <property type="protein sequence ID" value="CAT04999.1"/>
    <property type="molecule type" value="Genomic_DNA"/>
</dbReference>
<dbReference type="SMR" id="C5J6A7"/>
<dbReference type="MEROPS" id="M41.009"/>
<dbReference type="KEGG" id="mco:MCJ_003080"/>
<dbReference type="eggNOG" id="COG0465">
    <property type="taxonomic scope" value="Bacteria"/>
</dbReference>
<dbReference type="HOGENOM" id="CLU_000688_16_2_14"/>
<dbReference type="Proteomes" id="UP000001491">
    <property type="component" value="Chromosome"/>
</dbReference>
<dbReference type="GO" id="GO:0005886">
    <property type="term" value="C:plasma membrane"/>
    <property type="evidence" value="ECO:0007669"/>
    <property type="project" value="UniProtKB-SubCell"/>
</dbReference>
<dbReference type="GO" id="GO:0005524">
    <property type="term" value="F:ATP binding"/>
    <property type="evidence" value="ECO:0007669"/>
    <property type="project" value="UniProtKB-UniRule"/>
</dbReference>
<dbReference type="GO" id="GO:0016887">
    <property type="term" value="F:ATP hydrolysis activity"/>
    <property type="evidence" value="ECO:0007669"/>
    <property type="project" value="UniProtKB-UniRule"/>
</dbReference>
<dbReference type="GO" id="GO:0004176">
    <property type="term" value="F:ATP-dependent peptidase activity"/>
    <property type="evidence" value="ECO:0007669"/>
    <property type="project" value="InterPro"/>
</dbReference>
<dbReference type="GO" id="GO:0004222">
    <property type="term" value="F:metalloendopeptidase activity"/>
    <property type="evidence" value="ECO:0007669"/>
    <property type="project" value="InterPro"/>
</dbReference>
<dbReference type="GO" id="GO:0008270">
    <property type="term" value="F:zinc ion binding"/>
    <property type="evidence" value="ECO:0007669"/>
    <property type="project" value="UniProtKB-UniRule"/>
</dbReference>
<dbReference type="GO" id="GO:0030163">
    <property type="term" value="P:protein catabolic process"/>
    <property type="evidence" value="ECO:0007669"/>
    <property type="project" value="UniProtKB-UniRule"/>
</dbReference>
<dbReference type="GO" id="GO:0006508">
    <property type="term" value="P:proteolysis"/>
    <property type="evidence" value="ECO:0007669"/>
    <property type="project" value="UniProtKB-KW"/>
</dbReference>
<dbReference type="CDD" id="cd19501">
    <property type="entry name" value="RecA-like_FtsH"/>
    <property type="match status" value="1"/>
</dbReference>
<dbReference type="FunFam" id="1.10.8.60:FF:000001">
    <property type="entry name" value="ATP-dependent zinc metalloprotease FtsH"/>
    <property type="match status" value="1"/>
</dbReference>
<dbReference type="FunFam" id="1.20.58.760:FF:000001">
    <property type="entry name" value="ATP-dependent zinc metalloprotease FtsH"/>
    <property type="match status" value="1"/>
</dbReference>
<dbReference type="FunFam" id="3.40.50.300:FF:000001">
    <property type="entry name" value="ATP-dependent zinc metalloprotease FtsH"/>
    <property type="match status" value="1"/>
</dbReference>
<dbReference type="Gene3D" id="1.10.8.60">
    <property type="match status" value="1"/>
</dbReference>
<dbReference type="Gene3D" id="3.40.50.300">
    <property type="entry name" value="P-loop containing nucleotide triphosphate hydrolases"/>
    <property type="match status" value="1"/>
</dbReference>
<dbReference type="Gene3D" id="1.20.58.760">
    <property type="entry name" value="Peptidase M41"/>
    <property type="match status" value="1"/>
</dbReference>
<dbReference type="HAMAP" id="MF_01458">
    <property type="entry name" value="FtsH"/>
    <property type="match status" value="1"/>
</dbReference>
<dbReference type="InterPro" id="IPR003593">
    <property type="entry name" value="AAA+_ATPase"/>
</dbReference>
<dbReference type="InterPro" id="IPR041569">
    <property type="entry name" value="AAA_lid_3"/>
</dbReference>
<dbReference type="InterPro" id="IPR050928">
    <property type="entry name" value="ATP-dep_Zn_Metalloprotease"/>
</dbReference>
<dbReference type="InterPro" id="IPR003959">
    <property type="entry name" value="ATPase_AAA_core"/>
</dbReference>
<dbReference type="InterPro" id="IPR003960">
    <property type="entry name" value="ATPase_AAA_CS"/>
</dbReference>
<dbReference type="InterPro" id="IPR005936">
    <property type="entry name" value="FtsH"/>
</dbReference>
<dbReference type="InterPro" id="IPR027417">
    <property type="entry name" value="P-loop_NTPase"/>
</dbReference>
<dbReference type="InterPro" id="IPR000642">
    <property type="entry name" value="Peptidase_M41"/>
</dbReference>
<dbReference type="InterPro" id="IPR037219">
    <property type="entry name" value="Peptidase_M41-like"/>
</dbReference>
<dbReference type="NCBIfam" id="TIGR01241">
    <property type="entry name" value="FtsH_fam"/>
    <property type="match status" value="1"/>
</dbReference>
<dbReference type="PANTHER" id="PTHR43655:SF2">
    <property type="entry name" value="AFG3 LIKE MATRIX AAA PEPTIDASE SUBUNIT 2, ISOFORM A"/>
    <property type="match status" value="1"/>
</dbReference>
<dbReference type="PANTHER" id="PTHR43655">
    <property type="entry name" value="ATP-DEPENDENT PROTEASE"/>
    <property type="match status" value="1"/>
</dbReference>
<dbReference type="Pfam" id="PF00004">
    <property type="entry name" value="AAA"/>
    <property type="match status" value="1"/>
</dbReference>
<dbReference type="Pfam" id="PF17862">
    <property type="entry name" value="AAA_lid_3"/>
    <property type="match status" value="1"/>
</dbReference>
<dbReference type="Pfam" id="PF01434">
    <property type="entry name" value="Peptidase_M41"/>
    <property type="match status" value="1"/>
</dbReference>
<dbReference type="SMART" id="SM00382">
    <property type="entry name" value="AAA"/>
    <property type="match status" value="1"/>
</dbReference>
<dbReference type="SUPFAM" id="SSF140990">
    <property type="entry name" value="FtsH protease domain-like"/>
    <property type="match status" value="1"/>
</dbReference>
<dbReference type="SUPFAM" id="SSF52540">
    <property type="entry name" value="P-loop containing nucleoside triphosphate hydrolases"/>
    <property type="match status" value="1"/>
</dbReference>
<dbReference type="PROSITE" id="PS00674">
    <property type="entry name" value="AAA"/>
    <property type="match status" value="1"/>
</dbReference>
<gene>
    <name evidence="1" type="primary">ftsH</name>
    <name type="ordered locus">MCJ_003080</name>
</gene>
<sequence>MKQRMKKPSLGTFILILILIGILAYVLWQFLSPKLGYKSLSDLEQRIITNAKSATDDNFFWAFGFDISDFRIKVVEQVGNRIESYQVVADPTIIRLYQAGTGGVISENILSQLGSSAPKVNSWREIIQLATKASLTSEIIENAINQKINNALSLVGAGQSVSKNTIVNANLPVIFNFDRPRGNFLSSFIVPYIPFLLISLFGFWLFFRLSQNSQAGGGLFNPGKNQAIRIKSNKKFTDVAGNAEVKEEIAEFVDYLKNPKKYAAAGAKIPKGILLGGPPGTGKTLLAKATAGEANVPFFFISASNFVELYVGVGAKRVRELFKEARAESPAIIFIDELDAIGRSRGSGIGGGHDEREQTLNQLLVEMDGMVENSGILLIGATNRTDVLDPALLRPGRFDRSIIVGLPDIKEREEILKLHAKGKRISQNITLANIAKRTPGFSGAQLENVINEATLLSVREKTQVITGKQIDEAIDRVISGPAKKNRVITEDERTMVAYHEAGHAVVGIKLRSGVKVQKITIVPRGNTGGYNLMLPEHEKYNSTKSELLASIAAFMGGRAAEEIIYGKNEISTGAANDIEKATKIARRMVTEFGMSNLGPIQYEQDNSSPFLGRDYFKNASFSSQVGHEIDIEIREIISSSYKLAIATIQEHRLLLELIKDTLLEKETIVFEEIQQLEQTLKPLPKSTEIEEKQKVNTKDILEELMGSDFANNQEKSYENEDQNQNSLEAINYNIDDQDDDKNDSESKIDSSKEQ</sequence>
<comment type="function">
    <text evidence="1">Acts as a processive, ATP-dependent zinc metallopeptidase for both cytoplasmic and membrane proteins. Plays a role in the quality control of integral membrane proteins.</text>
</comment>
<comment type="cofactor">
    <cofactor evidence="1">
        <name>Zn(2+)</name>
        <dbReference type="ChEBI" id="CHEBI:29105"/>
    </cofactor>
    <text evidence="1">Binds 1 zinc ion per subunit.</text>
</comment>
<comment type="subunit">
    <text evidence="1">Homohexamer.</text>
</comment>
<comment type="subcellular location">
    <subcellularLocation>
        <location evidence="1">Cell membrane</location>
        <topology evidence="1">Multi-pass membrane protein</topology>
        <orientation evidence="1">Cytoplasmic side</orientation>
    </subcellularLocation>
</comment>
<comment type="similarity">
    <text evidence="1">In the central section; belongs to the AAA ATPase family.</text>
</comment>
<comment type="similarity">
    <text evidence="1">In the C-terminal section; belongs to the peptidase M41 family.</text>
</comment>
<evidence type="ECO:0000255" key="1">
    <source>
        <dbReference type="HAMAP-Rule" id="MF_01458"/>
    </source>
</evidence>
<evidence type="ECO:0000256" key="2">
    <source>
        <dbReference type="SAM" id="MobiDB-lite"/>
    </source>
</evidence>
<keyword id="KW-0067">ATP-binding</keyword>
<keyword id="KW-1003">Cell membrane</keyword>
<keyword id="KW-0378">Hydrolase</keyword>
<keyword id="KW-0472">Membrane</keyword>
<keyword id="KW-0479">Metal-binding</keyword>
<keyword id="KW-0482">Metalloprotease</keyword>
<keyword id="KW-0547">Nucleotide-binding</keyword>
<keyword id="KW-0645">Protease</keyword>
<keyword id="KW-1185">Reference proteome</keyword>
<keyword id="KW-0812">Transmembrane</keyword>
<keyword id="KW-1133">Transmembrane helix</keyword>
<keyword id="KW-0862">Zinc</keyword>
<proteinExistence type="inferred from homology"/>
<organism>
    <name type="scientific">Mesomycoplasma conjunctivae (strain ATCC 25834 / NCTC 10147 / HRC/581)</name>
    <name type="common">Mycoplasma conjunctivae</name>
    <dbReference type="NCBI Taxonomy" id="572263"/>
    <lineage>
        <taxon>Bacteria</taxon>
        <taxon>Bacillati</taxon>
        <taxon>Mycoplasmatota</taxon>
        <taxon>Mycoplasmoidales</taxon>
        <taxon>Metamycoplasmataceae</taxon>
        <taxon>Mesomycoplasma</taxon>
    </lineage>
</organism>
<protein>
    <recommendedName>
        <fullName evidence="1">ATP-dependent zinc metalloprotease FtsH</fullName>
        <ecNumber evidence="1">3.4.24.-</ecNumber>
    </recommendedName>
</protein>
<reference key="1">
    <citation type="journal article" date="2009" name="BMC Bioinformatics">
        <title>The Mycoplasma conjunctivae genome sequencing, annotation and analysis.</title>
        <authorList>
            <person name="Calderon-Copete S.P."/>
            <person name="Wigger G."/>
            <person name="Wunderlin C."/>
            <person name="Schmidheini T."/>
            <person name="Frey J."/>
            <person name="Quail M.A."/>
            <person name="Falquet L."/>
        </authorList>
    </citation>
    <scope>NUCLEOTIDE SEQUENCE [LARGE SCALE GENOMIC DNA]</scope>
    <source>
        <strain>ATCC 25834 / NCTC 10147 / HRC/581</strain>
    </source>
</reference>